<keyword id="KW-1003">Cell membrane</keyword>
<keyword id="KW-0472">Membrane</keyword>
<keyword id="KW-1185">Reference proteome</keyword>
<keyword id="KW-0812">Transmembrane</keyword>
<keyword id="KW-1133">Transmembrane helix</keyword>
<gene>
    <name type="ordered locus">Cgl0250</name>
    <name type="ordered locus">cg0304</name>
</gene>
<comment type="subcellular location">
    <subcellularLocation>
        <location evidence="2">Cell membrane</location>
        <topology evidence="2">Multi-pass membrane protein</topology>
    </subcellularLocation>
</comment>
<comment type="sequence caution" evidence="2">
    <conflict type="frameshift">
        <sequence resource="EMBL-CDS" id="CAA50297"/>
    </conflict>
</comment>
<comment type="sequence caution" evidence="2">
    <conflict type="frameshift">
        <sequence resource="EMBL-CDS" id="CAF18820"/>
    </conflict>
</comment>
<proteinExistence type="predicted"/>
<name>Y250_CORGL</name>
<sequence>MQSNLLAVLFALASALTIAWGTVVRHRIALRTPKDGSLRSSPLLNALMTPMWWAGMSTAMLAYFLQTVALGFGTLLVVQPVLVLSLMFTLPLSARFNGYRLRRTEIFWATLLTVAVGIMIVLGRPLPGNPHPPLDRWIPVLLVGVAVMGGMWLLAEYVLKKDKALILGLVTGALFGYVAVMSKAAVDLFVHQGITGLILNWEGYGLILTALLGTIVQQYSFNAGELQKSLPAMTIAEPIVAFSLGYLVLGEKFQVVDWEWIAMGIALLVMIVSTIALSRTSTMPAGSKR</sequence>
<dbReference type="EMBL" id="X70959">
    <property type="protein sequence ID" value="CAA50297.1"/>
    <property type="status" value="ALT_FRAME"/>
    <property type="molecule type" value="Genomic_DNA"/>
</dbReference>
<dbReference type="EMBL" id="BA000036">
    <property type="protein sequence ID" value="BAB97642.1"/>
    <property type="molecule type" value="Genomic_DNA"/>
</dbReference>
<dbReference type="EMBL" id="BX927148">
    <property type="protein sequence ID" value="CAF18820.1"/>
    <property type="status" value="ALT_FRAME"/>
    <property type="molecule type" value="Genomic_DNA"/>
</dbReference>
<dbReference type="PIR" id="I40724">
    <property type="entry name" value="I40724"/>
</dbReference>
<dbReference type="RefSeq" id="NP_599503.2">
    <property type="nucleotide sequence ID" value="NC_003450.3"/>
</dbReference>
<dbReference type="RefSeq" id="WP_011013505.1">
    <property type="nucleotide sequence ID" value="NC_003450.3"/>
</dbReference>
<dbReference type="STRING" id="196627.cg0304"/>
<dbReference type="DNASU" id="1021165"/>
<dbReference type="KEGG" id="cgb:cg0304"/>
<dbReference type="KEGG" id="cgl:Cgl0250"/>
<dbReference type="PATRIC" id="fig|196627.13.peg.254"/>
<dbReference type="eggNOG" id="COG0697">
    <property type="taxonomic scope" value="Bacteria"/>
</dbReference>
<dbReference type="HOGENOM" id="CLU_070294_2_0_11"/>
<dbReference type="OrthoDB" id="4382070at2"/>
<dbReference type="BioCyc" id="CORYNE:G18NG-9804-MONOMER"/>
<dbReference type="Proteomes" id="UP000000582">
    <property type="component" value="Chromosome"/>
</dbReference>
<dbReference type="Proteomes" id="UP000001009">
    <property type="component" value="Chromosome"/>
</dbReference>
<dbReference type="GO" id="GO:0005886">
    <property type="term" value="C:plasma membrane"/>
    <property type="evidence" value="ECO:0007669"/>
    <property type="project" value="UniProtKB-SubCell"/>
</dbReference>
<dbReference type="NCBIfam" id="NF038012">
    <property type="entry name" value="DMT_1"/>
    <property type="match status" value="1"/>
</dbReference>
<dbReference type="PANTHER" id="PTHR40761">
    <property type="entry name" value="CONSERVED INTEGRAL MEMBRANE ALANINE VALINE AND LEUCINE RICH PROTEIN-RELATED"/>
    <property type="match status" value="1"/>
</dbReference>
<dbReference type="PANTHER" id="PTHR40761:SF1">
    <property type="entry name" value="CONSERVED INTEGRAL MEMBRANE ALANINE VALINE AND LEUCINE RICH PROTEIN-RELATED"/>
    <property type="match status" value="1"/>
</dbReference>
<accession>P42459</accession>
<feature type="chain" id="PRO_0000214035" description="Uncharacterized protein Cgl0250/cg0304">
    <location>
        <begin position="1"/>
        <end position="289"/>
    </location>
</feature>
<feature type="transmembrane region" description="Helical" evidence="1">
    <location>
        <begin position="4"/>
        <end position="24"/>
    </location>
</feature>
<feature type="transmembrane region" description="Helical" evidence="1">
    <location>
        <begin position="44"/>
        <end position="64"/>
    </location>
</feature>
<feature type="transmembrane region" description="Helical" evidence="1">
    <location>
        <begin position="68"/>
        <end position="88"/>
    </location>
</feature>
<feature type="transmembrane region" description="Helical" evidence="1">
    <location>
        <begin position="106"/>
        <end position="126"/>
    </location>
</feature>
<feature type="transmembrane region" description="Helical" evidence="1">
    <location>
        <begin position="138"/>
        <end position="158"/>
    </location>
</feature>
<feature type="transmembrane region" description="Helical" evidence="1">
    <location>
        <begin position="166"/>
        <end position="186"/>
    </location>
</feature>
<feature type="transmembrane region" description="Helical" evidence="1">
    <location>
        <begin position="196"/>
        <end position="216"/>
    </location>
</feature>
<feature type="transmembrane region" description="Helical" evidence="1">
    <location>
        <begin position="230"/>
        <end position="250"/>
    </location>
</feature>
<feature type="transmembrane region" description="Helical" evidence="1">
    <location>
        <begin position="258"/>
        <end position="278"/>
    </location>
</feature>
<protein>
    <recommendedName>
        <fullName>Uncharacterized protein Cgl0250/cg0304</fullName>
    </recommendedName>
    <alternativeName>
        <fullName>ORFX</fullName>
    </alternativeName>
</protein>
<evidence type="ECO:0000255" key="1"/>
<evidence type="ECO:0000305" key="2"/>
<reference key="1">
    <citation type="journal article" date="1994" name="Appl. Environ. Microbiol.">
        <title>Leucine synthesis in Corynebacterium glutamicum: enzyme activities, structure of leuA, and effect of leuA inactivation on lysine synthesis.</title>
        <authorList>
            <person name="Patek M."/>
            <person name="Krumbach K."/>
            <person name="Eggeling L."/>
            <person name="Sahm H."/>
        </authorList>
    </citation>
    <scope>NUCLEOTIDE SEQUENCE [GENOMIC DNA]</scope>
    <source>
        <strain>ATCC 13032 / DSM 20300 / JCM 1318 / BCRC 11384 / CCUG 27702 / LMG 3730 / NBRC 12168 / NCIMB 10025 / NRRL B-2784 / 534</strain>
    </source>
</reference>
<reference key="2">
    <citation type="journal article" date="2003" name="Appl. Microbiol. Biotechnol.">
        <title>The Corynebacterium glutamicum genome: features and impacts on biotechnological processes.</title>
        <authorList>
            <person name="Ikeda M."/>
            <person name="Nakagawa S."/>
        </authorList>
    </citation>
    <scope>NUCLEOTIDE SEQUENCE [LARGE SCALE GENOMIC DNA]</scope>
    <source>
        <strain>ATCC 13032 / DSM 20300 / JCM 1318 / BCRC 11384 / CCUG 27702 / LMG 3730 / NBRC 12168 / NCIMB 10025 / NRRL B-2784 / 534</strain>
    </source>
</reference>
<reference key="3">
    <citation type="journal article" date="2003" name="J. Biotechnol.">
        <title>The complete Corynebacterium glutamicum ATCC 13032 genome sequence and its impact on the production of L-aspartate-derived amino acids and vitamins.</title>
        <authorList>
            <person name="Kalinowski J."/>
            <person name="Bathe B."/>
            <person name="Bartels D."/>
            <person name="Bischoff N."/>
            <person name="Bott M."/>
            <person name="Burkovski A."/>
            <person name="Dusch N."/>
            <person name="Eggeling L."/>
            <person name="Eikmanns B.J."/>
            <person name="Gaigalat L."/>
            <person name="Goesmann A."/>
            <person name="Hartmann M."/>
            <person name="Huthmacher K."/>
            <person name="Kraemer R."/>
            <person name="Linke B."/>
            <person name="McHardy A.C."/>
            <person name="Meyer F."/>
            <person name="Moeckel B."/>
            <person name="Pfefferle W."/>
            <person name="Puehler A."/>
            <person name="Rey D.A."/>
            <person name="Rueckert C."/>
            <person name="Rupp O."/>
            <person name="Sahm H."/>
            <person name="Wendisch V.F."/>
            <person name="Wiegraebe I."/>
            <person name="Tauch A."/>
        </authorList>
    </citation>
    <scope>NUCLEOTIDE SEQUENCE [LARGE SCALE GENOMIC DNA]</scope>
    <source>
        <strain>ATCC 13032 / DSM 20300 / JCM 1318 / BCRC 11384 / CCUG 27702 / LMG 3730 / NBRC 12168 / NCIMB 10025 / NRRL B-2784 / 534</strain>
    </source>
</reference>
<organism>
    <name type="scientific">Corynebacterium glutamicum (strain ATCC 13032 / DSM 20300 / JCM 1318 / BCRC 11384 / CCUG 27702 / LMG 3730 / NBRC 12168 / NCIMB 10025 / NRRL B-2784 / 534)</name>
    <dbReference type="NCBI Taxonomy" id="196627"/>
    <lineage>
        <taxon>Bacteria</taxon>
        <taxon>Bacillati</taxon>
        <taxon>Actinomycetota</taxon>
        <taxon>Actinomycetes</taxon>
        <taxon>Mycobacteriales</taxon>
        <taxon>Corynebacteriaceae</taxon>
        <taxon>Corynebacterium</taxon>
    </lineage>
</organism>